<name>YPEB_ECOLI</name>
<dbReference type="EMBL" id="M24278">
    <property type="status" value="NOT_ANNOTATED_CDS"/>
    <property type="molecule type" value="Genomic_DNA"/>
</dbReference>
<dbReference type="EMBL" id="U00096">
    <property type="protein sequence ID" value="ABD18696.1"/>
    <property type="molecule type" value="Genomic_DNA"/>
</dbReference>
<dbReference type="EMBL" id="AP009048">
    <property type="protein sequence ID" value="BAE76710.1"/>
    <property type="molecule type" value="Genomic_DNA"/>
</dbReference>
<dbReference type="RefSeq" id="WP_000410201.1">
    <property type="nucleotide sequence ID" value="NZ_STEB01000039.1"/>
</dbReference>
<dbReference type="RefSeq" id="YP_588464.1">
    <property type="nucleotide sequence ID" value="NC_000913.3"/>
</dbReference>
<dbReference type="SMR" id="P0AD40"/>
<dbReference type="BioGRID" id="4259671">
    <property type="interactions" value="7"/>
</dbReference>
<dbReference type="FunCoup" id="P0AD40">
    <property type="interactions" value="30"/>
</dbReference>
<dbReference type="STRING" id="511145.b4546"/>
<dbReference type="jPOST" id="P0AD40"/>
<dbReference type="PaxDb" id="511145-b4546"/>
<dbReference type="EnsemblBacteria" id="ABD18696">
    <property type="protein sequence ID" value="ABD18696"/>
    <property type="gene ID" value="b4546"/>
</dbReference>
<dbReference type="GeneID" id="1450285"/>
<dbReference type="KEGG" id="ecj:JW5877"/>
<dbReference type="KEGG" id="eco:b4546"/>
<dbReference type="KEGG" id="ecoc:C3026_13400"/>
<dbReference type="PATRIC" id="fig|511145.12.peg.2504"/>
<dbReference type="EchoBASE" id="EB4110"/>
<dbReference type="eggNOG" id="COG3530">
    <property type="taxonomic scope" value="Bacteria"/>
</dbReference>
<dbReference type="HOGENOM" id="CLU_176025_0_0_6"/>
<dbReference type="InParanoid" id="P0AD40"/>
<dbReference type="OMA" id="PGHYLNW"/>
<dbReference type="OrthoDB" id="9807855at2"/>
<dbReference type="PhylomeDB" id="P0AD40"/>
<dbReference type="BioCyc" id="EcoCyc:MONOMER0-2684"/>
<dbReference type="PRO" id="PR:P0AD40"/>
<dbReference type="Proteomes" id="UP000000625">
    <property type="component" value="Chromosome"/>
</dbReference>
<dbReference type="InterPro" id="IPR024530">
    <property type="entry name" value="QSregVF_b"/>
</dbReference>
<dbReference type="Pfam" id="PF12843">
    <property type="entry name" value="QSregVF_b"/>
    <property type="match status" value="1"/>
</dbReference>
<gene>
    <name type="primary">ypeB</name>
    <name type="ordered locus">b4546</name>
    <name type="ordered locus">JW5877</name>
</gene>
<proteinExistence type="predicted"/>
<accession>P0AD40</accession>
<accession>P56604</accession>
<accession>Q2EET1</accession>
<accession>Q2MAJ6</accession>
<evidence type="ECO:0000305" key="1"/>
<feature type="chain" id="PRO_0000169227" description="Uncharacterized protein YpeB">
    <location>
        <begin position="1"/>
        <end position="72"/>
    </location>
</feature>
<sequence length="72" mass="8415">MEKEQLIEIANTIMPFGKYKGRRLIDLPEEYLLWFARKDEFPAGKLGELMQITLLIKTEGLTQLVQPLKRPL</sequence>
<keyword id="KW-1185">Reference proteome</keyword>
<organism>
    <name type="scientific">Escherichia coli (strain K12)</name>
    <dbReference type="NCBI Taxonomy" id="83333"/>
    <lineage>
        <taxon>Bacteria</taxon>
        <taxon>Pseudomonadati</taxon>
        <taxon>Pseudomonadota</taxon>
        <taxon>Gammaproteobacteria</taxon>
        <taxon>Enterobacterales</taxon>
        <taxon>Enterobacteriaceae</taxon>
        <taxon>Escherichia</taxon>
    </lineage>
</organism>
<reference key="1">
    <citation type="submission" date="1989-04" db="EMBL/GenBank/DDBJ databases">
        <authorList>
            <person name="O'Connor M.J."/>
            <person name="Ally A."/>
            <person name="Ally D."/>
            <person name="Zhang X."/>
            <person name="Robichaud M."/>
            <person name="Backman K."/>
        </authorList>
    </citation>
    <scope>NUCLEOTIDE SEQUENCE [GENOMIC DNA]</scope>
</reference>
<reference key="2">
    <citation type="journal article" date="1997" name="Science">
        <title>The complete genome sequence of Escherichia coli K-12.</title>
        <authorList>
            <person name="Blattner F.R."/>
            <person name="Plunkett G. III"/>
            <person name="Bloch C.A."/>
            <person name="Perna N.T."/>
            <person name="Burland V."/>
            <person name="Riley M."/>
            <person name="Collado-Vides J."/>
            <person name="Glasner J.D."/>
            <person name="Rode C.K."/>
            <person name="Mayhew G.F."/>
            <person name="Gregor J."/>
            <person name="Davis N.W."/>
            <person name="Kirkpatrick H.A."/>
            <person name="Goeden M.A."/>
            <person name="Rose D.J."/>
            <person name="Mau B."/>
            <person name="Shao Y."/>
        </authorList>
    </citation>
    <scope>NUCLEOTIDE SEQUENCE [LARGE SCALE GENOMIC DNA]</scope>
    <source>
        <strain>K12 / MG1655 / ATCC 47076</strain>
    </source>
</reference>
<reference key="3">
    <citation type="journal article" date="2006" name="Mol. Syst. Biol.">
        <title>Highly accurate genome sequences of Escherichia coli K-12 strains MG1655 and W3110.</title>
        <authorList>
            <person name="Hayashi K."/>
            <person name="Morooka N."/>
            <person name="Yamamoto Y."/>
            <person name="Fujita K."/>
            <person name="Isono K."/>
            <person name="Choi S."/>
            <person name="Ohtsubo E."/>
            <person name="Baba T."/>
            <person name="Wanner B.L."/>
            <person name="Mori H."/>
            <person name="Horiuchi T."/>
        </authorList>
    </citation>
    <scope>NUCLEOTIDE SEQUENCE [LARGE SCALE GENOMIC DNA]</scope>
    <source>
        <strain>K12 / W3110 / ATCC 27325 / DSM 5911</strain>
    </source>
</reference>
<reference key="4">
    <citation type="unpublished observations" date="1998-08">
        <authorList>
            <person name="Rudd K.E."/>
        </authorList>
    </citation>
    <scope>IDENTIFICATION</scope>
</reference>
<comment type="sequence caution" evidence="1">
    <conflict type="frameshift">
        <sequence resource="EMBL" id="M24278"/>
    </conflict>
</comment>
<protein>
    <recommendedName>
        <fullName>Uncharacterized protein YpeB</fullName>
    </recommendedName>
</protein>